<evidence type="ECO:0000255" key="1">
    <source>
        <dbReference type="HAMAP-Rule" id="MF_00735"/>
    </source>
</evidence>
<comment type="function">
    <text evidence="1">Methylates ribosomal protein L11.</text>
</comment>
<comment type="catalytic activity">
    <reaction evidence="1">
        <text>L-lysyl-[protein] + 3 S-adenosyl-L-methionine = N(6),N(6),N(6)-trimethyl-L-lysyl-[protein] + 3 S-adenosyl-L-homocysteine + 3 H(+)</text>
        <dbReference type="Rhea" id="RHEA:54192"/>
        <dbReference type="Rhea" id="RHEA-COMP:9752"/>
        <dbReference type="Rhea" id="RHEA-COMP:13826"/>
        <dbReference type="ChEBI" id="CHEBI:15378"/>
        <dbReference type="ChEBI" id="CHEBI:29969"/>
        <dbReference type="ChEBI" id="CHEBI:57856"/>
        <dbReference type="ChEBI" id="CHEBI:59789"/>
        <dbReference type="ChEBI" id="CHEBI:61961"/>
    </reaction>
</comment>
<comment type="subcellular location">
    <subcellularLocation>
        <location evidence="1">Cytoplasm</location>
    </subcellularLocation>
</comment>
<comment type="similarity">
    <text evidence="1">Belongs to the methyltransferase superfamily. PrmA family.</text>
</comment>
<protein>
    <recommendedName>
        <fullName evidence="1">Ribosomal protein L11 methyltransferase</fullName>
        <shortName evidence="1">L11 Mtase</shortName>
        <ecNumber evidence="1">2.1.1.-</ecNumber>
    </recommendedName>
</protein>
<name>PRMA_BREBN</name>
<proteinExistence type="inferred from homology"/>
<reference key="1">
    <citation type="submission" date="2005-03" db="EMBL/GenBank/DDBJ databases">
        <title>Brevibacillus brevis strain 47, complete genome.</title>
        <authorList>
            <person name="Hosoyama A."/>
            <person name="Yamada R."/>
            <person name="Hongo Y."/>
            <person name="Terui Y."/>
            <person name="Ankai A."/>
            <person name="Masuyama W."/>
            <person name="Sekiguchi M."/>
            <person name="Takeda T."/>
            <person name="Asano K."/>
            <person name="Ohji S."/>
            <person name="Ichikawa N."/>
            <person name="Narita S."/>
            <person name="Aoki N."/>
            <person name="Miura H."/>
            <person name="Matsushita S."/>
            <person name="Sekigawa T."/>
            <person name="Yamagata H."/>
            <person name="Yoshikawa H."/>
            <person name="Udaka S."/>
            <person name="Tanikawa S."/>
            <person name="Fujita N."/>
        </authorList>
    </citation>
    <scope>NUCLEOTIDE SEQUENCE [LARGE SCALE GENOMIC DNA]</scope>
    <source>
        <strain>47 / JCM 6285 / NBRC 100599</strain>
    </source>
</reference>
<accession>C0ZB50</accession>
<keyword id="KW-0963">Cytoplasm</keyword>
<keyword id="KW-0489">Methyltransferase</keyword>
<keyword id="KW-1185">Reference proteome</keyword>
<keyword id="KW-0949">S-adenosyl-L-methionine</keyword>
<keyword id="KW-0808">Transferase</keyword>
<sequence>MKWSEISIHTTAEATEAVSSLLYELGANGVVIEDPEVLYREWDTPFGEIYQLSPDDFPAEGVFVKAYLPVDSSELLDVVEELKEQLAQLIEYGLDIGKASIAVNDVHEDEWAHAWKKYYKPVHVSDRMTIKPVWEEYVPKHPDEIIIEMDPGMAFGTGTHPTTILCLRALEKYMAKGDQVYDVGTGTAILSIAAIKLGAKDVLAMDLDEVAVRSAQANTELNGVHEHINVRQNNLLDGIEEQVEVVVANILAEVIVRFTDDVFRVLKPGGTFISSGIIAAREADVKAALVASGLEIVETIFIDDWVAIVAKKR</sequence>
<gene>
    <name evidence="1" type="primary">prmA</name>
    <name type="ordered locus">BBR47_20320</name>
</gene>
<organism>
    <name type="scientific">Brevibacillus brevis (strain 47 / JCM 6285 / NBRC 100599)</name>
    <dbReference type="NCBI Taxonomy" id="358681"/>
    <lineage>
        <taxon>Bacteria</taxon>
        <taxon>Bacillati</taxon>
        <taxon>Bacillota</taxon>
        <taxon>Bacilli</taxon>
        <taxon>Bacillales</taxon>
        <taxon>Paenibacillaceae</taxon>
        <taxon>Brevibacillus</taxon>
    </lineage>
</organism>
<feature type="chain" id="PRO_1000192586" description="Ribosomal protein L11 methyltransferase">
    <location>
        <begin position="1"/>
        <end position="313"/>
    </location>
</feature>
<feature type="binding site" evidence="1">
    <location>
        <position position="163"/>
    </location>
    <ligand>
        <name>S-adenosyl-L-methionine</name>
        <dbReference type="ChEBI" id="CHEBI:59789"/>
    </ligand>
</feature>
<feature type="binding site" evidence="1">
    <location>
        <position position="184"/>
    </location>
    <ligand>
        <name>S-adenosyl-L-methionine</name>
        <dbReference type="ChEBI" id="CHEBI:59789"/>
    </ligand>
</feature>
<feature type="binding site" evidence="1">
    <location>
        <position position="206"/>
    </location>
    <ligand>
        <name>S-adenosyl-L-methionine</name>
        <dbReference type="ChEBI" id="CHEBI:59789"/>
    </ligand>
</feature>
<feature type="binding site" evidence="1">
    <location>
        <position position="249"/>
    </location>
    <ligand>
        <name>S-adenosyl-L-methionine</name>
        <dbReference type="ChEBI" id="CHEBI:59789"/>
    </ligand>
</feature>
<dbReference type="EC" id="2.1.1.-" evidence="1"/>
<dbReference type="EMBL" id="AP008955">
    <property type="protein sequence ID" value="BAH43009.1"/>
    <property type="molecule type" value="Genomic_DNA"/>
</dbReference>
<dbReference type="RefSeq" id="WP_012685742.1">
    <property type="nucleotide sequence ID" value="NC_012491.1"/>
</dbReference>
<dbReference type="SMR" id="C0ZB50"/>
<dbReference type="STRING" id="358681.BBR47_20320"/>
<dbReference type="KEGG" id="bbe:BBR47_20320"/>
<dbReference type="eggNOG" id="COG2264">
    <property type="taxonomic scope" value="Bacteria"/>
</dbReference>
<dbReference type="HOGENOM" id="CLU_049382_0_1_9"/>
<dbReference type="Proteomes" id="UP000001877">
    <property type="component" value="Chromosome"/>
</dbReference>
<dbReference type="GO" id="GO:0005737">
    <property type="term" value="C:cytoplasm"/>
    <property type="evidence" value="ECO:0007669"/>
    <property type="project" value="UniProtKB-SubCell"/>
</dbReference>
<dbReference type="GO" id="GO:0016279">
    <property type="term" value="F:protein-lysine N-methyltransferase activity"/>
    <property type="evidence" value="ECO:0007669"/>
    <property type="project" value="RHEA"/>
</dbReference>
<dbReference type="GO" id="GO:0032259">
    <property type="term" value="P:methylation"/>
    <property type="evidence" value="ECO:0007669"/>
    <property type="project" value="UniProtKB-KW"/>
</dbReference>
<dbReference type="CDD" id="cd02440">
    <property type="entry name" value="AdoMet_MTases"/>
    <property type="match status" value="1"/>
</dbReference>
<dbReference type="Gene3D" id="3.40.50.150">
    <property type="entry name" value="Vaccinia Virus protein VP39"/>
    <property type="match status" value="1"/>
</dbReference>
<dbReference type="HAMAP" id="MF_00735">
    <property type="entry name" value="Methyltr_PrmA"/>
    <property type="match status" value="1"/>
</dbReference>
<dbReference type="InterPro" id="IPR050078">
    <property type="entry name" value="Ribosomal_L11_MeTrfase_PrmA"/>
</dbReference>
<dbReference type="InterPro" id="IPR004498">
    <property type="entry name" value="Ribosomal_PrmA_MeTrfase"/>
</dbReference>
<dbReference type="InterPro" id="IPR029063">
    <property type="entry name" value="SAM-dependent_MTases_sf"/>
</dbReference>
<dbReference type="NCBIfam" id="TIGR00406">
    <property type="entry name" value="prmA"/>
    <property type="match status" value="1"/>
</dbReference>
<dbReference type="PANTHER" id="PTHR43648">
    <property type="entry name" value="ELECTRON TRANSFER FLAVOPROTEIN BETA SUBUNIT LYSINE METHYLTRANSFERASE"/>
    <property type="match status" value="1"/>
</dbReference>
<dbReference type="PANTHER" id="PTHR43648:SF1">
    <property type="entry name" value="ELECTRON TRANSFER FLAVOPROTEIN BETA SUBUNIT LYSINE METHYLTRANSFERASE"/>
    <property type="match status" value="1"/>
</dbReference>
<dbReference type="Pfam" id="PF06325">
    <property type="entry name" value="PrmA"/>
    <property type="match status" value="1"/>
</dbReference>
<dbReference type="PIRSF" id="PIRSF000401">
    <property type="entry name" value="RPL11_MTase"/>
    <property type="match status" value="1"/>
</dbReference>
<dbReference type="SUPFAM" id="SSF53335">
    <property type="entry name" value="S-adenosyl-L-methionine-dependent methyltransferases"/>
    <property type="match status" value="1"/>
</dbReference>